<protein>
    <recommendedName>
        <fullName evidence="1">Arginine biosynthesis bifunctional protein ArgJ</fullName>
    </recommendedName>
    <domain>
        <recommendedName>
            <fullName evidence="1">Glutamate N-acetyltransferase</fullName>
            <ecNumber evidence="1">2.3.1.35</ecNumber>
        </recommendedName>
        <alternativeName>
            <fullName evidence="1">Ornithine acetyltransferase</fullName>
            <shortName evidence="1">OATase</shortName>
        </alternativeName>
        <alternativeName>
            <fullName evidence="1">Ornithine transacetylase</fullName>
        </alternativeName>
    </domain>
    <domain>
        <recommendedName>
            <fullName evidence="1">Amino-acid acetyltransferase</fullName>
            <ecNumber evidence="1">2.3.1.1</ecNumber>
        </recommendedName>
        <alternativeName>
            <fullName evidence="1">N-acetylglutamate synthase</fullName>
            <shortName evidence="1">AGSase</shortName>
        </alternativeName>
    </domain>
    <component>
        <recommendedName>
            <fullName evidence="1">Arginine biosynthesis bifunctional protein ArgJ alpha chain</fullName>
        </recommendedName>
    </component>
    <component>
        <recommendedName>
            <fullName evidence="1">Arginine biosynthesis bifunctional protein ArgJ beta chain</fullName>
        </recommendedName>
    </component>
</protein>
<evidence type="ECO:0000255" key="1">
    <source>
        <dbReference type="HAMAP-Rule" id="MF_01106"/>
    </source>
</evidence>
<gene>
    <name evidence="1" type="primary">argJ</name>
    <name type="ordered locus">GK0791</name>
</gene>
<comment type="function">
    <text evidence="1">Catalyzes two activities which are involved in the cyclic version of arginine biosynthesis: the synthesis of N-acetylglutamate from glutamate and acetyl-CoA as the acetyl donor, and of ornithine by transacetylation between N(2)-acetylornithine and glutamate.</text>
</comment>
<comment type="catalytic activity">
    <reaction evidence="1">
        <text>N(2)-acetyl-L-ornithine + L-glutamate = N-acetyl-L-glutamate + L-ornithine</text>
        <dbReference type="Rhea" id="RHEA:15349"/>
        <dbReference type="ChEBI" id="CHEBI:29985"/>
        <dbReference type="ChEBI" id="CHEBI:44337"/>
        <dbReference type="ChEBI" id="CHEBI:46911"/>
        <dbReference type="ChEBI" id="CHEBI:57805"/>
        <dbReference type="EC" id="2.3.1.35"/>
    </reaction>
</comment>
<comment type="catalytic activity">
    <reaction evidence="1">
        <text>L-glutamate + acetyl-CoA = N-acetyl-L-glutamate + CoA + H(+)</text>
        <dbReference type="Rhea" id="RHEA:24292"/>
        <dbReference type="ChEBI" id="CHEBI:15378"/>
        <dbReference type="ChEBI" id="CHEBI:29985"/>
        <dbReference type="ChEBI" id="CHEBI:44337"/>
        <dbReference type="ChEBI" id="CHEBI:57287"/>
        <dbReference type="ChEBI" id="CHEBI:57288"/>
        <dbReference type="EC" id="2.3.1.1"/>
    </reaction>
</comment>
<comment type="pathway">
    <text evidence="1">Amino-acid biosynthesis; L-arginine biosynthesis; L-ornithine and N-acetyl-L-glutamate from L-glutamate and N(2)-acetyl-L-ornithine (cyclic): step 1/1.</text>
</comment>
<comment type="pathway">
    <text evidence="1">Amino-acid biosynthesis; L-arginine biosynthesis; N(2)-acetyl-L-ornithine from L-glutamate: step 1/4.</text>
</comment>
<comment type="subunit">
    <text evidence="1">Heterotetramer of two alpha and two beta chains.</text>
</comment>
<comment type="subcellular location">
    <subcellularLocation>
        <location evidence="1">Cytoplasm</location>
    </subcellularLocation>
</comment>
<comment type="similarity">
    <text evidence="1">Belongs to the ArgJ family.</text>
</comment>
<proteinExistence type="inferred from homology"/>
<feature type="chain" id="PRO_0000227228" description="Arginine biosynthesis bifunctional protein ArgJ alpha chain" evidence="1">
    <location>
        <begin position="1"/>
        <end position="196"/>
    </location>
</feature>
<feature type="chain" id="PRO_0000227229" description="Arginine biosynthesis bifunctional protein ArgJ beta chain" evidence="1">
    <location>
        <begin position="197"/>
        <end position="410"/>
    </location>
</feature>
<feature type="active site" description="Nucleophile" evidence="1">
    <location>
        <position position="197"/>
    </location>
</feature>
<feature type="binding site" evidence="1">
    <location>
        <position position="160"/>
    </location>
    <ligand>
        <name>substrate</name>
    </ligand>
</feature>
<feature type="binding site" evidence="1">
    <location>
        <position position="186"/>
    </location>
    <ligand>
        <name>substrate</name>
    </ligand>
</feature>
<feature type="binding site" evidence="1">
    <location>
        <position position="197"/>
    </location>
    <ligand>
        <name>substrate</name>
    </ligand>
</feature>
<feature type="binding site" evidence="1">
    <location>
        <position position="283"/>
    </location>
    <ligand>
        <name>substrate</name>
    </ligand>
</feature>
<feature type="binding site" evidence="1">
    <location>
        <position position="405"/>
    </location>
    <ligand>
        <name>substrate</name>
    </ligand>
</feature>
<feature type="binding site" evidence="1">
    <location>
        <position position="410"/>
    </location>
    <ligand>
        <name>substrate</name>
    </ligand>
</feature>
<feature type="site" description="Involved in the stabilization of negative charge on the oxyanion by the formation of the oxyanion hole" evidence="1">
    <location>
        <position position="123"/>
    </location>
</feature>
<feature type="site" description="Involved in the stabilization of negative charge on the oxyanion by the formation of the oxyanion hole" evidence="1">
    <location>
        <position position="124"/>
    </location>
</feature>
<feature type="site" description="Cleavage; by autolysis" evidence="1">
    <location>
        <begin position="196"/>
        <end position="197"/>
    </location>
</feature>
<dbReference type="EC" id="2.3.1.35" evidence="1"/>
<dbReference type="EC" id="2.3.1.1" evidence="1"/>
<dbReference type="EMBL" id="BA000043">
    <property type="protein sequence ID" value="BAD75076.1"/>
    <property type="molecule type" value="Genomic_DNA"/>
</dbReference>
<dbReference type="RefSeq" id="WP_011230292.1">
    <property type="nucleotide sequence ID" value="NC_006510.1"/>
</dbReference>
<dbReference type="SMR" id="Q5L1V4"/>
<dbReference type="STRING" id="235909.GK0791"/>
<dbReference type="MEROPS" id="T05.002"/>
<dbReference type="KEGG" id="gka:GK0791"/>
<dbReference type="PATRIC" id="fig|235909.7.peg.876"/>
<dbReference type="eggNOG" id="COG1364">
    <property type="taxonomic scope" value="Bacteria"/>
</dbReference>
<dbReference type="HOGENOM" id="CLU_027172_1_0_9"/>
<dbReference type="UniPathway" id="UPA00068">
    <property type="reaction ID" value="UER00106"/>
</dbReference>
<dbReference type="UniPathway" id="UPA00068">
    <property type="reaction ID" value="UER00111"/>
</dbReference>
<dbReference type="Proteomes" id="UP000001172">
    <property type="component" value="Chromosome"/>
</dbReference>
<dbReference type="GO" id="GO:0005737">
    <property type="term" value="C:cytoplasm"/>
    <property type="evidence" value="ECO:0007669"/>
    <property type="project" value="UniProtKB-SubCell"/>
</dbReference>
<dbReference type="GO" id="GO:0004358">
    <property type="term" value="F:glutamate N-acetyltransferase activity"/>
    <property type="evidence" value="ECO:0007669"/>
    <property type="project" value="UniProtKB-UniRule"/>
</dbReference>
<dbReference type="GO" id="GO:0004042">
    <property type="term" value="F:L-glutamate N-acetyltransferase activity"/>
    <property type="evidence" value="ECO:0007669"/>
    <property type="project" value="UniProtKB-UniRule"/>
</dbReference>
<dbReference type="GO" id="GO:0006526">
    <property type="term" value="P:L-arginine biosynthetic process"/>
    <property type="evidence" value="ECO:0007669"/>
    <property type="project" value="UniProtKB-UniRule"/>
</dbReference>
<dbReference type="GO" id="GO:0006592">
    <property type="term" value="P:ornithine biosynthetic process"/>
    <property type="evidence" value="ECO:0007669"/>
    <property type="project" value="TreeGrafter"/>
</dbReference>
<dbReference type="CDD" id="cd02152">
    <property type="entry name" value="OAT"/>
    <property type="match status" value="1"/>
</dbReference>
<dbReference type="FunFam" id="3.10.20.340:FF:000001">
    <property type="entry name" value="Arginine biosynthesis bifunctional protein ArgJ, chloroplastic"/>
    <property type="match status" value="1"/>
</dbReference>
<dbReference type="FunFam" id="3.60.70.12:FF:000001">
    <property type="entry name" value="Arginine biosynthesis bifunctional protein ArgJ, chloroplastic"/>
    <property type="match status" value="1"/>
</dbReference>
<dbReference type="FunFam" id="3.30.2330.10:FF:000001">
    <property type="entry name" value="Arginine biosynthesis bifunctional protein ArgJ, mitochondrial"/>
    <property type="match status" value="1"/>
</dbReference>
<dbReference type="Gene3D" id="3.30.2330.10">
    <property type="entry name" value="arginine biosynthesis bifunctional protein suprefamily"/>
    <property type="match status" value="1"/>
</dbReference>
<dbReference type="Gene3D" id="3.10.20.340">
    <property type="entry name" value="ArgJ beta chain, C-terminal domain"/>
    <property type="match status" value="1"/>
</dbReference>
<dbReference type="Gene3D" id="3.60.70.12">
    <property type="entry name" value="L-amino peptidase D-ALA esterase/amidase"/>
    <property type="match status" value="1"/>
</dbReference>
<dbReference type="HAMAP" id="MF_01106">
    <property type="entry name" value="ArgJ"/>
    <property type="match status" value="1"/>
</dbReference>
<dbReference type="InterPro" id="IPR002813">
    <property type="entry name" value="Arg_biosynth_ArgJ"/>
</dbReference>
<dbReference type="InterPro" id="IPR016117">
    <property type="entry name" value="ArgJ-like_dom_sf"/>
</dbReference>
<dbReference type="InterPro" id="IPR042195">
    <property type="entry name" value="ArgJ_beta_C"/>
</dbReference>
<dbReference type="NCBIfam" id="TIGR00120">
    <property type="entry name" value="ArgJ"/>
    <property type="match status" value="1"/>
</dbReference>
<dbReference type="NCBIfam" id="NF003802">
    <property type="entry name" value="PRK05388.1"/>
    <property type="match status" value="1"/>
</dbReference>
<dbReference type="PANTHER" id="PTHR23100">
    <property type="entry name" value="ARGININE BIOSYNTHESIS BIFUNCTIONAL PROTEIN ARGJ"/>
    <property type="match status" value="1"/>
</dbReference>
<dbReference type="PANTHER" id="PTHR23100:SF0">
    <property type="entry name" value="ARGININE BIOSYNTHESIS BIFUNCTIONAL PROTEIN ARGJ, MITOCHONDRIAL"/>
    <property type="match status" value="1"/>
</dbReference>
<dbReference type="Pfam" id="PF01960">
    <property type="entry name" value="ArgJ"/>
    <property type="match status" value="1"/>
</dbReference>
<dbReference type="SUPFAM" id="SSF56266">
    <property type="entry name" value="DmpA/ArgJ-like"/>
    <property type="match status" value="1"/>
</dbReference>
<accession>Q5L1V4</accession>
<keyword id="KW-0012">Acyltransferase</keyword>
<keyword id="KW-0028">Amino-acid biosynthesis</keyword>
<keyword id="KW-0055">Arginine biosynthesis</keyword>
<keyword id="KW-0068">Autocatalytic cleavage</keyword>
<keyword id="KW-0963">Cytoplasm</keyword>
<keyword id="KW-0511">Multifunctional enzyme</keyword>
<keyword id="KW-1185">Reference proteome</keyword>
<keyword id="KW-0808">Transferase</keyword>
<name>ARGJ_GEOKA</name>
<sequence>MTATKQTAQVTAVADGTVVTPKGFQAAGVHAGLRYSKKDLGVILCDVPASAAAVYTQSHFQAAPLKVTQASLAVEQKLQAVIVNSACANACTGEQGLKDAYEMRELCAKQFGLALHHVAVASTGVIGEYLPMEKIRAGIKQLVPGVTMADAEAFQTAILTTDTVMKRACYQTTVDGKTVTVGGAAKGSGMIHPNMATMLAFITTDANISSAVLHDALRSITDVSFNQITVDGDTSTNDMVVVMASGLAGNDELTPNHPDWEHFYEALRKTCEDLAKQIARDGEGATKLIEVRVRGAKTDEEAKKIAKQIVGSNLVKTAVYGADANWGRIIGAIGYSDAEVNPDNVDVAIGPIVMLKGSEPQPFSEEEATAYLQQETVVIEVDLHLGDGFGVAWGCDLTYDYVKINASYRT</sequence>
<organism>
    <name type="scientific">Geobacillus kaustophilus (strain HTA426)</name>
    <dbReference type="NCBI Taxonomy" id="235909"/>
    <lineage>
        <taxon>Bacteria</taxon>
        <taxon>Bacillati</taxon>
        <taxon>Bacillota</taxon>
        <taxon>Bacilli</taxon>
        <taxon>Bacillales</taxon>
        <taxon>Anoxybacillaceae</taxon>
        <taxon>Geobacillus</taxon>
        <taxon>Geobacillus thermoleovorans group</taxon>
    </lineage>
</organism>
<reference key="1">
    <citation type="journal article" date="2004" name="Nucleic Acids Res.">
        <title>Thermoadaptation trait revealed by the genome sequence of thermophilic Geobacillus kaustophilus.</title>
        <authorList>
            <person name="Takami H."/>
            <person name="Takaki Y."/>
            <person name="Chee G.-J."/>
            <person name="Nishi S."/>
            <person name="Shimamura S."/>
            <person name="Suzuki H."/>
            <person name="Matsui S."/>
            <person name="Uchiyama I."/>
        </authorList>
    </citation>
    <scope>NUCLEOTIDE SEQUENCE [LARGE SCALE GENOMIC DNA]</scope>
    <source>
        <strain>HTA426</strain>
    </source>
</reference>